<reference key="1">
    <citation type="journal article" date="2006" name="Mol. Phylogenet. Evol.">
        <title>Molecular systematics of the Hyaenidae: relationships of a relictual lineage resolved by a molecular supermatrix.</title>
        <authorList>
            <person name="Koepfli K.-P."/>
            <person name="Jenks S.M."/>
            <person name="Eizirik E."/>
            <person name="Zahirpour T."/>
            <person name="Van Valkenburgh B."/>
            <person name="Wayne R.K."/>
        </authorList>
    </citation>
    <scope>NUCLEOTIDE SEQUENCE [GENOMIC DNA]</scope>
</reference>
<comment type="function">
    <text evidence="2">Component of the ubiquinol-cytochrome c reductase complex (complex III or cytochrome b-c1 complex) that is part of the mitochondrial respiratory chain. The b-c1 complex mediates electron transfer from ubiquinol to cytochrome c. Contributes to the generation of a proton gradient across the mitochondrial membrane that is then used for ATP synthesis.</text>
</comment>
<comment type="cofactor">
    <cofactor evidence="2">
        <name>heme b</name>
        <dbReference type="ChEBI" id="CHEBI:60344"/>
    </cofactor>
    <text evidence="2">Binds 2 heme b groups non-covalently.</text>
</comment>
<comment type="subunit">
    <text evidence="2">The cytochrome bc1 complex contains 11 subunits: 3 respiratory subunits (MT-CYB, CYC1 and UQCRFS1), 2 core proteins (UQCRC1 and UQCRC2) and 6 low-molecular weight proteins (UQCRH/QCR6, UQCRB/QCR7, UQCRQ/QCR8, UQCR10/QCR9, UQCR11/QCR10 and a cleavage product of UQCRFS1). This cytochrome bc1 complex then forms a dimer.</text>
</comment>
<comment type="subcellular location">
    <subcellularLocation>
        <location evidence="2">Mitochondrion inner membrane</location>
        <topology evidence="2">Multi-pass membrane protein</topology>
    </subcellularLocation>
</comment>
<comment type="miscellaneous">
    <text evidence="1">Heme 1 (or BL or b562) is low-potential and absorbs at about 562 nm, and heme 2 (or BH or b566) is high-potential and absorbs at about 566 nm.</text>
</comment>
<comment type="similarity">
    <text evidence="3 4">Belongs to the cytochrome b family.</text>
</comment>
<comment type="caution">
    <text evidence="2">The full-length protein contains only eight transmembrane helices, not nine as predicted by bioinformatics tools.</text>
</comment>
<dbReference type="EMBL" id="AY928671">
    <property type="protein sequence ID" value="AAY18240.1"/>
    <property type="molecule type" value="Genomic_DNA"/>
</dbReference>
<dbReference type="RefSeq" id="YP_009178462.1">
    <property type="nucleotide sequence ID" value="NC_028313.1"/>
</dbReference>
<dbReference type="SMR" id="Q3ZEC9"/>
<dbReference type="GeneID" id="26129957"/>
<dbReference type="CTD" id="4519"/>
<dbReference type="Proteomes" id="UP000472241">
    <property type="component" value="Mitochondrion"/>
</dbReference>
<dbReference type="GO" id="GO:0005743">
    <property type="term" value="C:mitochondrial inner membrane"/>
    <property type="evidence" value="ECO:0007669"/>
    <property type="project" value="UniProtKB-SubCell"/>
</dbReference>
<dbReference type="GO" id="GO:0045275">
    <property type="term" value="C:respiratory chain complex III"/>
    <property type="evidence" value="ECO:0007669"/>
    <property type="project" value="InterPro"/>
</dbReference>
<dbReference type="GO" id="GO:0046872">
    <property type="term" value="F:metal ion binding"/>
    <property type="evidence" value="ECO:0007669"/>
    <property type="project" value="UniProtKB-KW"/>
</dbReference>
<dbReference type="GO" id="GO:0008121">
    <property type="term" value="F:ubiquinol-cytochrome-c reductase activity"/>
    <property type="evidence" value="ECO:0007669"/>
    <property type="project" value="InterPro"/>
</dbReference>
<dbReference type="GO" id="GO:0006122">
    <property type="term" value="P:mitochondrial electron transport, ubiquinol to cytochrome c"/>
    <property type="evidence" value="ECO:0007669"/>
    <property type="project" value="TreeGrafter"/>
</dbReference>
<dbReference type="CDD" id="cd00290">
    <property type="entry name" value="cytochrome_b_C"/>
    <property type="match status" value="1"/>
</dbReference>
<dbReference type="CDD" id="cd00284">
    <property type="entry name" value="Cytochrome_b_N"/>
    <property type="match status" value="1"/>
</dbReference>
<dbReference type="FunFam" id="1.20.810.10:FF:000002">
    <property type="entry name" value="Cytochrome b"/>
    <property type="match status" value="1"/>
</dbReference>
<dbReference type="Gene3D" id="1.20.810.10">
    <property type="entry name" value="Cytochrome Bc1 Complex, Chain C"/>
    <property type="match status" value="1"/>
</dbReference>
<dbReference type="InterPro" id="IPR005798">
    <property type="entry name" value="Cyt_b/b6_C"/>
</dbReference>
<dbReference type="InterPro" id="IPR036150">
    <property type="entry name" value="Cyt_b/b6_C_sf"/>
</dbReference>
<dbReference type="InterPro" id="IPR005797">
    <property type="entry name" value="Cyt_b/b6_N"/>
</dbReference>
<dbReference type="InterPro" id="IPR027387">
    <property type="entry name" value="Cytb/b6-like_sf"/>
</dbReference>
<dbReference type="InterPro" id="IPR030689">
    <property type="entry name" value="Cytochrome_b"/>
</dbReference>
<dbReference type="InterPro" id="IPR048260">
    <property type="entry name" value="Cytochrome_b_C_euk/bac"/>
</dbReference>
<dbReference type="InterPro" id="IPR048259">
    <property type="entry name" value="Cytochrome_b_N_euk/bac"/>
</dbReference>
<dbReference type="InterPro" id="IPR016174">
    <property type="entry name" value="Di-haem_cyt_TM"/>
</dbReference>
<dbReference type="PANTHER" id="PTHR19271">
    <property type="entry name" value="CYTOCHROME B"/>
    <property type="match status" value="1"/>
</dbReference>
<dbReference type="PANTHER" id="PTHR19271:SF16">
    <property type="entry name" value="CYTOCHROME B"/>
    <property type="match status" value="1"/>
</dbReference>
<dbReference type="Pfam" id="PF00032">
    <property type="entry name" value="Cytochrom_B_C"/>
    <property type="match status" value="1"/>
</dbReference>
<dbReference type="Pfam" id="PF00033">
    <property type="entry name" value="Cytochrome_B"/>
    <property type="match status" value="1"/>
</dbReference>
<dbReference type="PIRSF" id="PIRSF038885">
    <property type="entry name" value="COB"/>
    <property type="match status" value="1"/>
</dbReference>
<dbReference type="SUPFAM" id="SSF81648">
    <property type="entry name" value="a domain/subunit of cytochrome bc1 complex (Ubiquinol-cytochrome c reductase)"/>
    <property type="match status" value="1"/>
</dbReference>
<dbReference type="SUPFAM" id="SSF81342">
    <property type="entry name" value="Transmembrane di-heme cytochromes"/>
    <property type="match status" value="1"/>
</dbReference>
<dbReference type="PROSITE" id="PS51003">
    <property type="entry name" value="CYTB_CTER"/>
    <property type="match status" value="1"/>
</dbReference>
<dbReference type="PROSITE" id="PS51002">
    <property type="entry name" value="CYTB_NTER"/>
    <property type="match status" value="1"/>
</dbReference>
<keyword id="KW-0249">Electron transport</keyword>
<keyword id="KW-0349">Heme</keyword>
<keyword id="KW-0408">Iron</keyword>
<keyword id="KW-0472">Membrane</keyword>
<keyword id="KW-0479">Metal-binding</keyword>
<keyword id="KW-0496">Mitochondrion</keyword>
<keyword id="KW-0999">Mitochondrion inner membrane</keyword>
<keyword id="KW-1185">Reference proteome</keyword>
<keyword id="KW-0679">Respiratory chain</keyword>
<keyword id="KW-0812">Transmembrane</keyword>
<keyword id="KW-1133">Transmembrane helix</keyword>
<keyword id="KW-0813">Transport</keyword>
<keyword id="KW-0830">Ubiquinone</keyword>
<sequence length="379" mass="42582">MTNIRKSHPLIKIINHSFIDLPAPSNISAWWNFGSLLGVCLILQILTGLFLAMHYTSDTMTAFSSVTHICRDVNYGWIIRYMHANGASMFFICLYMHVGRGMYYGSYTFSETWNIGILLLFTVMATAFMGYVLPWGQMSFWGATVITNLLSAIPYIGTNLVEWIWGGFSVDKATLTRFFAFHFILPFIISALAAVHLLFLHETGSNNPSGITSDSDKIPFHPYYTIKDILGILALTLTLMLLVLFSPDLLGDPDNYIPANPLSTPPHIKPEWYFLFAYAILRSIPNKLGGVLALVLSILILAIIPLLHTSKQRGMTFRPLSQCLFWLLVADLLTLTWIGGQPVEHPFITIGQLASILYFLTPLVLMPISGIIENRLLKW</sequence>
<evidence type="ECO:0000250" key="1"/>
<evidence type="ECO:0000250" key="2">
    <source>
        <dbReference type="UniProtKB" id="P00157"/>
    </source>
</evidence>
<evidence type="ECO:0000255" key="3">
    <source>
        <dbReference type="PROSITE-ProRule" id="PRU00967"/>
    </source>
</evidence>
<evidence type="ECO:0000255" key="4">
    <source>
        <dbReference type="PROSITE-ProRule" id="PRU00968"/>
    </source>
</evidence>
<protein>
    <recommendedName>
        <fullName>Cytochrome b</fullName>
    </recommendedName>
    <alternativeName>
        <fullName>Complex III subunit 3</fullName>
    </alternativeName>
    <alternativeName>
        <fullName>Complex III subunit III</fullName>
    </alternativeName>
    <alternativeName>
        <fullName>Cytochrome b-c1 complex subunit 3</fullName>
    </alternativeName>
    <alternativeName>
        <fullName>Ubiquinol-cytochrome-c reductase complex cytochrome b subunit</fullName>
    </alternativeName>
</protein>
<gene>
    <name type="primary">MT-CYB</name>
    <name type="synonym">COB</name>
    <name type="synonym">CYTB</name>
    <name type="synonym">MTCYB</name>
</gene>
<organism>
    <name type="scientific">Lynx canadensis</name>
    <name type="common">Canada lynx</name>
    <name type="synonym">Felis canadensis</name>
    <dbReference type="NCBI Taxonomy" id="61383"/>
    <lineage>
        <taxon>Eukaryota</taxon>
        <taxon>Metazoa</taxon>
        <taxon>Chordata</taxon>
        <taxon>Craniata</taxon>
        <taxon>Vertebrata</taxon>
        <taxon>Euteleostomi</taxon>
        <taxon>Mammalia</taxon>
        <taxon>Eutheria</taxon>
        <taxon>Laurasiatheria</taxon>
        <taxon>Carnivora</taxon>
        <taxon>Feliformia</taxon>
        <taxon>Felidae</taxon>
        <taxon>Felinae</taxon>
        <taxon>Lynx</taxon>
    </lineage>
</organism>
<name>CYB_LYNCA</name>
<accession>Q3ZEC9</accession>
<feature type="chain" id="PRO_0000247330" description="Cytochrome b">
    <location>
        <begin position="1"/>
        <end position="379"/>
    </location>
</feature>
<feature type="transmembrane region" description="Helical" evidence="2">
    <location>
        <begin position="33"/>
        <end position="53"/>
    </location>
</feature>
<feature type="transmembrane region" description="Helical" evidence="2">
    <location>
        <begin position="77"/>
        <end position="98"/>
    </location>
</feature>
<feature type="transmembrane region" description="Helical" evidence="2">
    <location>
        <begin position="113"/>
        <end position="133"/>
    </location>
</feature>
<feature type="transmembrane region" description="Helical" evidence="2">
    <location>
        <begin position="178"/>
        <end position="198"/>
    </location>
</feature>
<feature type="transmembrane region" description="Helical" evidence="2">
    <location>
        <begin position="226"/>
        <end position="246"/>
    </location>
</feature>
<feature type="transmembrane region" description="Helical" evidence="2">
    <location>
        <begin position="288"/>
        <end position="308"/>
    </location>
</feature>
<feature type="transmembrane region" description="Helical" evidence="2">
    <location>
        <begin position="320"/>
        <end position="340"/>
    </location>
</feature>
<feature type="transmembrane region" description="Helical" evidence="2">
    <location>
        <begin position="347"/>
        <end position="367"/>
    </location>
</feature>
<feature type="binding site" description="axial binding residue" evidence="2">
    <location>
        <position position="83"/>
    </location>
    <ligand>
        <name>heme b</name>
        <dbReference type="ChEBI" id="CHEBI:60344"/>
        <label>b562</label>
    </ligand>
    <ligandPart>
        <name>Fe</name>
        <dbReference type="ChEBI" id="CHEBI:18248"/>
    </ligandPart>
</feature>
<feature type="binding site" description="axial binding residue" evidence="2">
    <location>
        <position position="97"/>
    </location>
    <ligand>
        <name>heme b</name>
        <dbReference type="ChEBI" id="CHEBI:60344"/>
        <label>b566</label>
    </ligand>
    <ligandPart>
        <name>Fe</name>
        <dbReference type="ChEBI" id="CHEBI:18248"/>
    </ligandPart>
</feature>
<feature type="binding site" description="axial binding residue" evidence="2">
    <location>
        <position position="182"/>
    </location>
    <ligand>
        <name>heme b</name>
        <dbReference type="ChEBI" id="CHEBI:60344"/>
        <label>b562</label>
    </ligand>
    <ligandPart>
        <name>Fe</name>
        <dbReference type="ChEBI" id="CHEBI:18248"/>
    </ligandPart>
</feature>
<feature type="binding site" description="axial binding residue" evidence="2">
    <location>
        <position position="196"/>
    </location>
    <ligand>
        <name>heme b</name>
        <dbReference type="ChEBI" id="CHEBI:60344"/>
        <label>b566</label>
    </ligand>
    <ligandPart>
        <name>Fe</name>
        <dbReference type="ChEBI" id="CHEBI:18248"/>
    </ligandPart>
</feature>
<feature type="binding site" evidence="2">
    <location>
        <position position="201"/>
    </location>
    <ligand>
        <name>a ubiquinone</name>
        <dbReference type="ChEBI" id="CHEBI:16389"/>
    </ligand>
</feature>
<proteinExistence type="inferred from homology"/>
<geneLocation type="mitochondrion"/>